<reference key="1">
    <citation type="journal article" date="2006" name="Peptides">
        <title>Elements of the granular gland peptidome and transcriptome persist in air-dried skin of the South American orange-legged leaf frog, Phyllomedusa hypocondrialis.</title>
        <authorList>
            <person name="Chen T."/>
            <person name="Zhou M."/>
            <person name="Gagliardo R."/>
            <person name="Walker B."/>
            <person name="Shaw C."/>
        </authorList>
    </citation>
    <scope>NUCLEOTIDE SEQUENCE [MRNA]</scope>
    <scope>AMIDATION AT GLN-73</scope>
    <source>
        <tissue>Skin</tissue>
    </source>
</reference>
<reference key="2">
    <citation type="journal article" date="2006" name="Biochem. Biophys. Res. Commun.">
        <title>Novel dermaseptins from Phyllomedusa hypochondrialis (Amphibia).</title>
        <authorList>
            <person name="Brand G.D."/>
            <person name="Leite J.R.S.A."/>
            <person name="de Sa Mandel S.M."/>
            <person name="Mesquita D.A."/>
            <person name="Silva L.P."/>
            <person name="Prates M.V."/>
            <person name="Barbosa E.A."/>
            <person name="Vinecky F."/>
            <person name="Martins G.R."/>
            <person name="Galasso J.H."/>
            <person name="Kuckelhaus S.A.S."/>
            <person name="Sampaio R.N.R."/>
            <person name="Furtado J.R. Jr."/>
            <person name="Andrade A.C."/>
            <person name="Bloch C. Jr."/>
        </authorList>
    </citation>
    <scope>PROTEIN SEQUENCE OF 46-73</scope>
    <scope>SUBCELLULAR LOCATION</scope>
    <scope>TISSUE SPECIFICITY</scope>
    <scope>MASS SPECTROMETRY</scope>
    <source>
        <tissue>Skin secretion</tissue>
    </source>
</reference>
<reference key="3">
    <citation type="journal article" date="2008" name="Peptides">
        <title>A consistent nomenclature of antimicrobial peptides isolated from frogs of the subfamily Phyllomedusinae.</title>
        <authorList>
            <person name="Amiche M."/>
            <person name="Ladram A."/>
            <person name="Nicolas P."/>
        </authorList>
    </citation>
    <scope>NOMENCLATURE</scope>
</reference>
<proteinExistence type="evidence at protein level"/>
<comment type="function">
    <text evidence="1">Has antimicrobial activity.</text>
</comment>
<comment type="subcellular location">
    <subcellularLocation>
        <location evidence="4">Secreted</location>
    </subcellularLocation>
</comment>
<comment type="tissue specificity">
    <text evidence="4">Expressed by the skin glands.</text>
</comment>
<comment type="mass spectrometry" mass="2868.36" error="0.1" method="MALDI" evidence="4"/>
<comment type="similarity">
    <text evidence="2">Belongs to the frog skin active peptide (FSAP) family. Dermaseptin subfamily.</text>
</comment>
<comment type="online information" name="The antimicrobial peptide database">
    <link uri="https://wangapd3.com/database/query_output.php?ID=0942"/>
</comment>
<name>DRS1_PITHY</name>
<feature type="signal peptide" evidence="2">
    <location>
        <begin position="1"/>
        <end position="22"/>
    </location>
</feature>
<feature type="propeptide" id="PRO_0000449575" evidence="4">
    <location>
        <begin position="23"/>
        <end position="45"/>
    </location>
</feature>
<feature type="peptide" id="PRO_0000248494" description="Dermaseptin-H1" evidence="4">
    <location>
        <begin position="46"/>
        <end position="73"/>
    </location>
</feature>
<feature type="propeptide" id="PRO_0000449576" evidence="9">
    <location>
        <begin position="75"/>
        <end position="76"/>
    </location>
</feature>
<feature type="region of interest" description="Disordered" evidence="3">
    <location>
        <begin position="25"/>
        <end position="44"/>
    </location>
</feature>
<feature type="compositionally biased region" description="Acidic residues" evidence="3">
    <location>
        <begin position="30"/>
        <end position="41"/>
    </location>
</feature>
<feature type="modified residue" description="Glutamine amide" evidence="9">
    <location>
        <position position="73"/>
    </location>
</feature>
<accession>P84597</accession>
<accession>Q0VZ37</accession>
<keyword id="KW-0027">Amidation</keyword>
<keyword id="KW-0878">Amphibian defense peptide</keyword>
<keyword id="KW-0929">Antimicrobial</keyword>
<keyword id="KW-0165">Cleavage on pair of basic residues</keyword>
<keyword id="KW-0903">Direct protein sequencing</keyword>
<keyword id="KW-0964">Secreted</keyword>
<keyword id="KW-0732">Signal</keyword>
<evidence type="ECO:0000250" key="1">
    <source>
        <dbReference type="UniProtKB" id="P83639"/>
    </source>
</evidence>
<evidence type="ECO:0000255" key="2"/>
<evidence type="ECO:0000256" key="3">
    <source>
        <dbReference type="SAM" id="MobiDB-lite"/>
    </source>
</evidence>
<evidence type="ECO:0000269" key="4">
    <source>
    </source>
</evidence>
<evidence type="ECO:0000303" key="5">
    <source>
    </source>
</evidence>
<evidence type="ECO:0000303" key="6">
    <source>
    </source>
</evidence>
<evidence type="ECO:0000303" key="7">
    <source>
    </source>
</evidence>
<evidence type="ECO:0000305" key="8"/>
<evidence type="ECO:0000305" key="9">
    <source>
    </source>
</evidence>
<protein>
    <recommendedName>
        <fullName evidence="5">Dermaseptin-H1</fullName>
        <shortName evidence="8">DRS-H1</shortName>
    </recommendedName>
    <alternativeName>
        <fullName evidence="6">DShypo 02</fullName>
    </alternativeName>
    <alternativeName>
        <fullName evidence="7">Dermaseptin-H4</fullName>
        <shortName evidence="7">DRS-H4</shortName>
    </alternativeName>
</protein>
<organism>
    <name type="scientific">Pithecopus hypochondrialis</name>
    <name type="common">Orange-legged leaf frog</name>
    <name type="synonym">Phyllomedusa hypochondrialis</name>
    <dbReference type="NCBI Taxonomy" id="317381"/>
    <lineage>
        <taxon>Eukaryota</taxon>
        <taxon>Metazoa</taxon>
        <taxon>Chordata</taxon>
        <taxon>Craniata</taxon>
        <taxon>Vertebrata</taxon>
        <taxon>Euteleostomi</taxon>
        <taxon>Amphibia</taxon>
        <taxon>Batrachia</taxon>
        <taxon>Anura</taxon>
        <taxon>Neobatrachia</taxon>
        <taxon>Hyloidea</taxon>
        <taxon>Hylidae</taxon>
        <taxon>Phyllomedusinae</taxon>
        <taxon>Pithecopus</taxon>
    </lineage>
</organism>
<dbReference type="EMBL" id="AM229015">
    <property type="protein sequence ID" value="CAJ76139.1"/>
    <property type="molecule type" value="mRNA"/>
</dbReference>
<dbReference type="GO" id="GO:0005576">
    <property type="term" value="C:extracellular region"/>
    <property type="evidence" value="ECO:0007669"/>
    <property type="project" value="UniProtKB-SubCell"/>
</dbReference>
<dbReference type="GO" id="GO:0006952">
    <property type="term" value="P:defense response"/>
    <property type="evidence" value="ECO:0007669"/>
    <property type="project" value="UniProtKB-KW"/>
</dbReference>
<dbReference type="InterPro" id="IPR022731">
    <property type="entry name" value="Dermaseptin_dom"/>
</dbReference>
<dbReference type="InterPro" id="IPR004275">
    <property type="entry name" value="Frog_antimicrobial_propeptide"/>
</dbReference>
<dbReference type="InterPro" id="IPR016322">
    <property type="entry name" value="FSAP"/>
</dbReference>
<dbReference type="Pfam" id="PF12121">
    <property type="entry name" value="DD_K"/>
    <property type="match status" value="1"/>
</dbReference>
<dbReference type="Pfam" id="PF03032">
    <property type="entry name" value="FSAP_sig_propep"/>
    <property type="match status" value="1"/>
</dbReference>
<dbReference type="PIRSF" id="PIRSF001822">
    <property type="entry name" value="Dermaseptin_precursor"/>
    <property type="match status" value="1"/>
</dbReference>
<sequence length="76" mass="8540">MDILKKSLFIVLFLGLVSLSICEEEKRENEDEEEQEDDEQSEEKRGLWKSLLKNVGVAAGKAALNAVTDMVNQGEQ</sequence>